<name>RS18_ALIF1</name>
<protein>
    <recommendedName>
        <fullName evidence="1">Small ribosomal subunit protein bS18</fullName>
    </recommendedName>
    <alternativeName>
        <fullName evidence="2">30S ribosomal protein S18</fullName>
    </alternativeName>
</protein>
<accession>Q5E2E0</accession>
<proteinExistence type="inferred from homology"/>
<keyword id="KW-1185">Reference proteome</keyword>
<keyword id="KW-0687">Ribonucleoprotein</keyword>
<keyword id="KW-0689">Ribosomal protein</keyword>
<keyword id="KW-0694">RNA-binding</keyword>
<keyword id="KW-0699">rRNA-binding</keyword>
<evidence type="ECO:0000255" key="1">
    <source>
        <dbReference type="HAMAP-Rule" id="MF_00270"/>
    </source>
</evidence>
<evidence type="ECO:0000305" key="2"/>
<gene>
    <name evidence="1" type="primary">rpsR</name>
    <name type="ordered locus">VF_2311</name>
</gene>
<sequence length="75" mass="8897">MARFFRRRKFCRFTAEGVQEIDYKDVATLKNYITEAGKIVPSRITGTRAKYQRQLARAIKRSRYLALLPYTDKHL</sequence>
<comment type="function">
    <text evidence="1">Binds as a heterodimer with protein bS6 to the central domain of the 16S rRNA, where it helps stabilize the platform of the 30S subunit.</text>
</comment>
<comment type="subunit">
    <text evidence="1">Part of the 30S ribosomal subunit. Forms a tight heterodimer with protein bS6.</text>
</comment>
<comment type="similarity">
    <text evidence="1">Belongs to the bacterial ribosomal protein bS18 family.</text>
</comment>
<organism>
    <name type="scientific">Aliivibrio fischeri (strain ATCC 700601 / ES114)</name>
    <name type="common">Vibrio fischeri</name>
    <dbReference type="NCBI Taxonomy" id="312309"/>
    <lineage>
        <taxon>Bacteria</taxon>
        <taxon>Pseudomonadati</taxon>
        <taxon>Pseudomonadota</taxon>
        <taxon>Gammaproteobacteria</taxon>
        <taxon>Vibrionales</taxon>
        <taxon>Vibrionaceae</taxon>
        <taxon>Aliivibrio</taxon>
    </lineage>
</organism>
<reference key="1">
    <citation type="journal article" date="2005" name="Proc. Natl. Acad. Sci. U.S.A.">
        <title>Complete genome sequence of Vibrio fischeri: a symbiotic bacterium with pathogenic congeners.</title>
        <authorList>
            <person name="Ruby E.G."/>
            <person name="Urbanowski M."/>
            <person name="Campbell J."/>
            <person name="Dunn A."/>
            <person name="Faini M."/>
            <person name="Gunsalus R."/>
            <person name="Lostroh P."/>
            <person name="Lupp C."/>
            <person name="McCann J."/>
            <person name="Millikan D."/>
            <person name="Schaefer A."/>
            <person name="Stabb E."/>
            <person name="Stevens A."/>
            <person name="Visick K."/>
            <person name="Whistler C."/>
            <person name="Greenberg E.P."/>
        </authorList>
    </citation>
    <scope>NUCLEOTIDE SEQUENCE [LARGE SCALE GENOMIC DNA]</scope>
    <source>
        <strain>ATCC 700601 / ES114</strain>
    </source>
</reference>
<feature type="chain" id="PRO_1000003654" description="Small ribosomal subunit protein bS18">
    <location>
        <begin position="1"/>
        <end position="75"/>
    </location>
</feature>
<dbReference type="EMBL" id="CP000020">
    <property type="protein sequence ID" value="AAW86806.1"/>
    <property type="molecule type" value="Genomic_DNA"/>
</dbReference>
<dbReference type="RefSeq" id="WP_005421136.1">
    <property type="nucleotide sequence ID" value="NZ_CAWLES010000001.1"/>
</dbReference>
<dbReference type="RefSeq" id="YP_205694.1">
    <property type="nucleotide sequence ID" value="NC_006840.2"/>
</dbReference>
<dbReference type="SMR" id="Q5E2E0"/>
<dbReference type="STRING" id="312309.VF_2311"/>
<dbReference type="EnsemblBacteria" id="AAW86806">
    <property type="protein sequence ID" value="AAW86806"/>
    <property type="gene ID" value="VF_2311"/>
</dbReference>
<dbReference type="GeneID" id="56276704"/>
<dbReference type="KEGG" id="vfi:VF_2311"/>
<dbReference type="PATRIC" id="fig|312309.11.peg.2349"/>
<dbReference type="eggNOG" id="COG0238">
    <property type="taxonomic scope" value="Bacteria"/>
</dbReference>
<dbReference type="HOGENOM" id="CLU_148710_2_3_6"/>
<dbReference type="OrthoDB" id="9812008at2"/>
<dbReference type="PRO" id="PR:Q5E2E0"/>
<dbReference type="Proteomes" id="UP000000537">
    <property type="component" value="Chromosome I"/>
</dbReference>
<dbReference type="GO" id="GO:0022627">
    <property type="term" value="C:cytosolic small ribosomal subunit"/>
    <property type="evidence" value="ECO:0007669"/>
    <property type="project" value="TreeGrafter"/>
</dbReference>
<dbReference type="GO" id="GO:0070181">
    <property type="term" value="F:small ribosomal subunit rRNA binding"/>
    <property type="evidence" value="ECO:0007669"/>
    <property type="project" value="TreeGrafter"/>
</dbReference>
<dbReference type="GO" id="GO:0003735">
    <property type="term" value="F:structural constituent of ribosome"/>
    <property type="evidence" value="ECO:0007669"/>
    <property type="project" value="InterPro"/>
</dbReference>
<dbReference type="GO" id="GO:0006412">
    <property type="term" value="P:translation"/>
    <property type="evidence" value="ECO:0007669"/>
    <property type="project" value="UniProtKB-UniRule"/>
</dbReference>
<dbReference type="FunFam" id="4.10.640.10:FF:000001">
    <property type="entry name" value="30S ribosomal protein S18"/>
    <property type="match status" value="1"/>
</dbReference>
<dbReference type="Gene3D" id="4.10.640.10">
    <property type="entry name" value="Ribosomal protein S18"/>
    <property type="match status" value="1"/>
</dbReference>
<dbReference type="HAMAP" id="MF_00270">
    <property type="entry name" value="Ribosomal_bS18"/>
    <property type="match status" value="1"/>
</dbReference>
<dbReference type="InterPro" id="IPR001648">
    <property type="entry name" value="Ribosomal_bS18"/>
</dbReference>
<dbReference type="InterPro" id="IPR018275">
    <property type="entry name" value="Ribosomal_bS18_CS"/>
</dbReference>
<dbReference type="InterPro" id="IPR036870">
    <property type="entry name" value="Ribosomal_bS18_sf"/>
</dbReference>
<dbReference type="NCBIfam" id="TIGR00165">
    <property type="entry name" value="S18"/>
    <property type="match status" value="1"/>
</dbReference>
<dbReference type="PANTHER" id="PTHR13479">
    <property type="entry name" value="30S RIBOSOMAL PROTEIN S18"/>
    <property type="match status" value="1"/>
</dbReference>
<dbReference type="PANTHER" id="PTHR13479:SF40">
    <property type="entry name" value="SMALL RIBOSOMAL SUBUNIT PROTEIN BS18M"/>
    <property type="match status" value="1"/>
</dbReference>
<dbReference type="Pfam" id="PF01084">
    <property type="entry name" value="Ribosomal_S18"/>
    <property type="match status" value="1"/>
</dbReference>
<dbReference type="PRINTS" id="PR00974">
    <property type="entry name" value="RIBOSOMALS18"/>
</dbReference>
<dbReference type="SUPFAM" id="SSF46911">
    <property type="entry name" value="Ribosomal protein S18"/>
    <property type="match status" value="1"/>
</dbReference>
<dbReference type="PROSITE" id="PS00057">
    <property type="entry name" value="RIBOSOMAL_S18"/>
    <property type="match status" value="1"/>
</dbReference>